<sequence>MLPRKREIVAGEVEDLQKKTRAGEGEATREEGDAAMAGRGNEIDEDLHSRQLAVYGRETMKPLFGSNVLVSGLQGLGAEIAKNLVLAGVKSVTLHDDGNVELWDLSSNFFLSENDVGQNRAQACVQKLQELNNAVLVSALTGDLTKEHLSKFQAVVFTDISLDKAIEFDDYCHSHQPPIAFIKSEVRGLFGSVFCDFGPEFTVLDVDGEEPHTGIVASISNDNPALVSCVDDERLEFQDGDLVVFSEVHGMTELNDGKPRKVKNARPYSFFLEEDTSSFGAYVRGGIVTQVKPPKVIKFKPLKEAMSEPGEFLMSDFSKFERPPLLHLAFQALDKFRTELSRFPVAGSTDDVQRVIEYAISINDTLGDRKLEEIDKKLLHHFASGSRAVLNPMAAMFGGIVGQEVVKACSGKFHPLYQFFYFDSVESLPVDPLEPGDLKPKNSRYDAQISVFGSTLQNKLEEAKIFMVGSGALGCEFLKNLALMGISCSQNGNLTVTDDDVIEKSNLSRQFLFRDWNIGQPKSTVAATAAMVINPKLHVEALQNRASPETENVFNDAFWENLDAVVNALDNVTARMYIDSRCVYFQKPLLESGTLGAKCNTQMVIPHLTENYGASRDPPEKQAPMCTVHSFPHNIDHCLTWARSEFEGLLEKTPTEVNAFLSNPTTYISAARTAGDAQARDQLERVIECLDRDKCETFQDSITWARLKFEDYFSNRVKQLTFTFPEDSMTSSGAPFWSAPKRFPRPVEFSSSDPSQLSFILAAAILRAETFGIPISEWAKTPNKLAAEAVDKVIVPDFQPKQGVKIVTDEKATSLSSASVDDAAVIEELIAKLEEVSKTLPSGFHMNPIQFEKDDDTNFHMDVIAGFANMRARNYSIPEVDKLKAKFIAGRIIPAIATSTAMATGLVCLELYKALAGGHKVEDYRNTFANLAIPLFSIAEPVPPKTIKHQELSWTVWDRWTVTGNITLRELLEWLKEKGLNAYSISCGTSLLYNSMFPRHKERLDRKVVDVAREVAKMEVPSYRRHLDVVVACEDDDDNDVDIPLVSVYFR</sequence>
<evidence type="ECO:0000250" key="1"/>
<evidence type="ECO:0000250" key="2">
    <source>
        <dbReference type="UniProtKB" id="P20973"/>
    </source>
</evidence>
<evidence type="ECO:0000250" key="3">
    <source>
        <dbReference type="UniProtKB" id="P22515"/>
    </source>
</evidence>
<evidence type="ECO:0000255" key="4">
    <source>
        <dbReference type="PROSITE-ProRule" id="PRU10132"/>
    </source>
</evidence>
<evidence type="ECO:0000256" key="5">
    <source>
        <dbReference type="SAM" id="MobiDB-lite"/>
    </source>
</evidence>
<evidence type="ECO:0000305" key="6"/>
<feature type="chain" id="PRO_0000194964" description="Ubiquitin-activating enzyme E1 2">
    <location>
        <begin position="1"/>
        <end position="1051"/>
    </location>
</feature>
<feature type="repeat" description="1-1">
    <location>
        <begin position="56"/>
        <end position="194"/>
    </location>
</feature>
<feature type="repeat" description="1-2">
    <location>
        <begin position="453"/>
        <end position="605"/>
    </location>
</feature>
<feature type="region of interest" description="Disordered" evidence="5">
    <location>
        <begin position="1"/>
        <end position="42"/>
    </location>
</feature>
<feature type="region of interest" description="2 approximate repeats">
    <location>
        <begin position="56"/>
        <end position="605"/>
    </location>
</feature>
<feature type="compositionally biased region" description="Basic and acidic residues" evidence="5">
    <location>
        <begin position="1"/>
        <end position="32"/>
    </location>
</feature>
<feature type="active site" description="Glycyl thioester intermediate" evidence="4">
    <location>
        <position position="626"/>
    </location>
</feature>
<feature type="binding site" evidence="3">
    <location>
        <position position="472"/>
    </location>
    <ligand>
        <name>ATP</name>
        <dbReference type="ChEBI" id="CHEBI:30616"/>
    </ligand>
</feature>
<feature type="binding site" evidence="3">
    <location>
        <position position="498"/>
    </location>
    <ligand>
        <name>ATP</name>
        <dbReference type="ChEBI" id="CHEBI:30616"/>
    </ligand>
</feature>
<feature type="binding site" evidence="3">
    <location>
        <position position="509"/>
    </location>
    <ligand>
        <name>ATP</name>
        <dbReference type="ChEBI" id="CHEBI:30616"/>
    </ligand>
</feature>
<feature type="binding site" evidence="3">
    <location>
        <position position="522"/>
    </location>
    <ligand>
        <name>ATP</name>
        <dbReference type="ChEBI" id="CHEBI:30616"/>
    </ligand>
</feature>
<feature type="binding site" evidence="3">
    <location>
        <begin position="570"/>
        <end position="571"/>
    </location>
    <ligand>
        <name>ATP</name>
        <dbReference type="ChEBI" id="CHEBI:30616"/>
    </ligand>
</feature>
<protein>
    <recommendedName>
        <fullName>Ubiquitin-activating enzyme E1 2</fullName>
        <ecNumber evidence="2">6.2.1.45</ecNumber>
    </recommendedName>
</protein>
<name>UBE12_WHEAT</name>
<organism>
    <name type="scientific">Triticum aestivum</name>
    <name type="common">Wheat</name>
    <dbReference type="NCBI Taxonomy" id="4565"/>
    <lineage>
        <taxon>Eukaryota</taxon>
        <taxon>Viridiplantae</taxon>
        <taxon>Streptophyta</taxon>
        <taxon>Embryophyta</taxon>
        <taxon>Tracheophyta</taxon>
        <taxon>Spermatophyta</taxon>
        <taxon>Magnoliopsida</taxon>
        <taxon>Liliopsida</taxon>
        <taxon>Poales</taxon>
        <taxon>Poaceae</taxon>
        <taxon>BOP clade</taxon>
        <taxon>Pooideae</taxon>
        <taxon>Triticodae</taxon>
        <taxon>Triticeae</taxon>
        <taxon>Triticinae</taxon>
        <taxon>Triticum</taxon>
    </lineage>
</organism>
<keyword id="KW-0067">ATP-binding</keyword>
<keyword id="KW-0436">Ligase</keyword>
<keyword id="KW-0547">Nucleotide-binding</keyword>
<keyword id="KW-1185">Reference proteome</keyword>
<keyword id="KW-0677">Repeat</keyword>
<keyword id="KW-0833">Ubl conjugation pathway</keyword>
<comment type="function">
    <text evidence="2">Activates ubiquitin by first adenylating its C-terminal glycine residue with ATP, and thereafter linking this residue to the side chain of a cysteine residue in E1, yielding a ubiquitin-E1 thioester and free AMP.</text>
</comment>
<comment type="catalytic activity">
    <reaction evidence="2">
        <text>ATP + ubiquitin + [E1 ubiquitin-activating enzyme]-L-cysteine = AMP + diphosphate + S-ubiquitinyl-[E1 ubiquitin-activating enzyme]-L-cysteine.</text>
        <dbReference type="EC" id="6.2.1.45"/>
    </reaction>
</comment>
<comment type="pathway">
    <text evidence="2">Protein modification; protein ubiquitination.</text>
</comment>
<comment type="subunit">
    <text evidence="1">Monomer.</text>
</comment>
<comment type="miscellaneous">
    <text evidence="2">There are two active sites within the E1 molecule, allowing it to accommodate two ubiquitin moieties at a time, with a new ubiquitin forming an adenylate intermediate as the previous one is transferred to the thiol site.</text>
</comment>
<comment type="miscellaneous">
    <text>There are multiple genes encoding E1 in wheat.</text>
</comment>
<comment type="similarity">
    <text evidence="6">Belongs to the ubiquitin-activating E1 family.</text>
</comment>
<reference key="1">
    <citation type="journal article" date="1992" name="J. Biol. Chem.">
        <title>Multiple forms of ubiquitin-activating enzyme E1 from wheat. Identification of an essential cysteine by in vitro mutagenesis.</title>
        <authorList>
            <person name="Hatfield P.M."/>
            <person name="Vierstra R.D."/>
        </authorList>
    </citation>
    <scope>NUCLEOTIDE SEQUENCE [MRNA]</scope>
</reference>
<gene>
    <name type="primary">UBA2</name>
</gene>
<proteinExistence type="evidence at transcript level"/>
<accession>P31251</accession>
<dbReference type="EC" id="6.2.1.45" evidence="2"/>
<dbReference type="EMBL" id="M90663">
    <property type="protein sequence ID" value="AAA34265.1"/>
    <property type="molecule type" value="mRNA"/>
</dbReference>
<dbReference type="SMR" id="P31251"/>
<dbReference type="STRING" id="4565.P31251"/>
<dbReference type="PaxDb" id="4565-Traes_5DL_0BE2B1D42.2"/>
<dbReference type="eggNOG" id="KOG2012">
    <property type="taxonomic scope" value="Eukaryota"/>
</dbReference>
<dbReference type="BioCyc" id="MetaCyc:MONOMER-16753"/>
<dbReference type="UniPathway" id="UPA00143"/>
<dbReference type="Proteomes" id="UP000019116">
    <property type="component" value="Unplaced"/>
</dbReference>
<dbReference type="ExpressionAtlas" id="P31251">
    <property type="expression patterns" value="baseline and differential"/>
</dbReference>
<dbReference type="GO" id="GO:0005737">
    <property type="term" value="C:cytoplasm"/>
    <property type="evidence" value="ECO:0000318"/>
    <property type="project" value="GO_Central"/>
</dbReference>
<dbReference type="GO" id="GO:0005634">
    <property type="term" value="C:nucleus"/>
    <property type="evidence" value="ECO:0000318"/>
    <property type="project" value="GO_Central"/>
</dbReference>
<dbReference type="GO" id="GO:0005524">
    <property type="term" value="F:ATP binding"/>
    <property type="evidence" value="ECO:0007669"/>
    <property type="project" value="UniProtKB-KW"/>
</dbReference>
<dbReference type="GO" id="GO:0004839">
    <property type="term" value="F:ubiquitin activating enzyme activity"/>
    <property type="evidence" value="ECO:0000318"/>
    <property type="project" value="GO_Central"/>
</dbReference>
<dbReference type="GO" id="GO:0006974">
    <property type="term" value="P:DNA damage response"/>
    <property type="evidence" value="ECO:0000318"/>
    <property type="project" value="GO_Central"/>
</dbReference>
<dbReference type="GO" id="GO:0016567">
    <property type="term" value="P:protein ubiquitination"/>
    <property type="evidence" value="ECO:0000318"/>
    <property type="project" value="GO_Central"/>
</dbReference>
<dbReference type="GO" id="GO:0006511">
    <property type="term" value="P:ubiquitin-dependent protein catabolic process"/>
    <property type="evidence" value="ECO:0000318"/>
    <property type="project" value="GO_Central"/>
</dbReference>
<dbReference type="CDD" id="cd01491">
    <property type="entry name" value="Ube1_repeat1"/>
    <property type="match status" value="1"/>
</dbReference>
<dbReference type="CDD" id="cd01490">
    <property type="entry name" value="Ube1_repeat2"/>
    <property type="match status" value="1"/>
</dbReference>
<dbReference type="FunFam" id="3.40.50.12550:FF:000001">
    <property type="entry name" value="Ubiquitin-activating enzyme E1 1"/>
    <property type="match status" value="1"/>
</dbReference>
<dbReference type="FunFam" id="3.40.50.720:FF:000015">
    <property type="entry name" value="Ubiquitin-activating enzyme E1 1"/>
    <property type="match status" value="1"/>
</dbReference>
<dbReference type="FunFam" id="1.10.10.2660:FF:000002">
    <property type="entry name" value="Ubiquitin-activating enzyme E1 2"/>
    <property type="match status" value="1"/>
</dbReference>
<dbReference type="FunFam" id="3.10.290.60:FF:000001">
    <property type="entry name" value="Ubiquitin-activating enzyme E1 2"/>
    <property type="match status" value="1"/>
</dbReference>
<dbReference type="FunFam" id="3.50.50.80:FF:000003">
    <property type="entry name" value="Ubiquitin-activating enzyme E1 2"/>
    <property type="match status" value="1"/>
</dbReference>
<dbReference type="FunFam" id="2.40.30.180:FF:000001">
    <property type="entry name" value="ubiquitin-like modifier-activating enzyme 1"/>
    <property type="match status" value="1"/>
</dbReference>
<dbReference type="Gene3D" id="3.40.50.720">
    <property type="entry name" value="NAD(P)-binding Rossmann-like Domain"/>
    <property type="match status" value="1"/>
</dbReference>
<dbReference type="Gene3D" id="2.40.30.180">
    <property type="entry name" value="Ubiquitin-activating enzyme E1, FCCH domain"/>
    <property type="match status" value="1"/>
</dbReference>
<dbReference type="Gene3D" id="3.50.50.80">
    <property type="entry name" value="Ubiquitin-activating enzyme E1, inactive adenylation domain, subdomain 1"/>
    <property type="match status" value="1"/>
</dbReference>
<dbReference type="Gene3D" id="3.40.50.12550">
    <property type="entry name" value="Ubiquitin-activating enzyme E1, inactive adenylation domain, subdomain 2"/>
    <property type="match status" value="1"/>
</dbReference>
<dbReference type="Gene3D" id="1.10.10.2660">
    <property type="entry name" value="Ubiquitin-activating enzyme E1, SCCH domain"/>
    <property type="match status" value="1"/>
</dbReference>
<dbReference type="Gene3D" id="3.10.290.60">
    <property type="entry name" value="Ubiquitin-activating enzyme E1, UFD domain"/>
    <property type="match status" value="1"/>
</dbReference>
<dbReference type="InterPro" id="IPR032420">
    <property type="entry name" value="E1_4HB"/>
</dbReference>
<dbReference type="InterPro" id="IPR032418">
    <property type="entry name" value="E1_FCCH"/>
</dbReference>
<dbReference type="InterPro" id="IPR042302">
    <property type="entry name" value="E1_FCCH_sf"/>
</dbReference>
<dbReference type="InterPro" id="IPR045886">
    <property type="entry name" value="ThiF/MoeB/HesA"/>
</dbReference>
<dbReference type="InterPro" id="IPR000594">
    <property type="entry name" value="ThiF_NAD_FAD-bd"/>
</dbReference>
<dbReference type="InterPro" id="IPR018965">
    <property type="entry name" value="Ub-activating_enz_E1_C"/>
</dbReference>
<dbReference type="InterPro" id="IPR042449">
    <property type="entry name" value="Ub-E1_IAD_1"/>
</dbReference>
<dbReference type="InterPro" id="IPR038252">
    <property type="entry name" value="UBA_E1_C_sf"/>
</dbReference>
<dbReference type="InterPro" id="IPR019572">
    <property type="entry name" value="UBA_E1_SCCH"/>
</dbReference>
<dbReference type="InterPro" id="IPR042063">
    <property type="entry name" value="Ubi_acti_E1_SCCH"/>
</dbReference>
<dbReference type="InterPro" id="IPR035985">
    <property type="entry name" value="Ubiquitin-activating_enz"/>
</dbReference>
<dbReference type="InterPro" id="IPR018075">
    <property type="entry name" value="UBQ-activ_enz_E1"/>
</dbReference>
<dbReference type="InterPro" id="IPR018074">
    <property type="entry name" value="UBQ-activ_enz_E1_CS"/>
</dbReference>
<dbReference type="InterPro" id="IPR033127">
    <property type="entry name" value="UBQ-activ_enz_E1_Cys_AS"/>
</dbReference>
<dbReference type="InterPro" id="IPR000011">
    <property type="entry name" value="UBQ/SUMO-activ_enz_E1-like"/>
</dbReference>
<dbReference type="NCBIfam" id="TIGR01408">
    <property type="entry name" value="Ube1"/>
    <property type="match status" value="1"/>
</dbReference>
<dbReference type="PANTHER" id="PTHR10953:SF162">
    <property type="entry name" value="SUMO-ACTIVATING ENZYME SUBUNIT 1"/>
    <property type="match status" value="1"/>
</dbReference>
<dbReference type="PANTHER" id="PTHR10953">
    <property type="entry name" value="UBIQUITIN-ACTIVATING ENZYME E1"/>
    <property type="match status" value="1"/>
</dbReference>
<dbReference type="Pfam" id="PF16191">
    <property type="entry name" value="E1_4HB"/>
    <property type="match status" value="1"/>
</dbReference>
<dbReference type="Pfam" id="PF16190">
    <property type="entry name" value="E1_FCCH"/>
    <property type="match status" value="1"/>
</dbReference>
<dbReference type="Pfam" id="PF09358">
    <property type="entry name" value="E1_UFD"/>
    <property type="match status" value="1"/>
</dbReference>
<dbReference type="Pfam" id="PF00899">
    <property type="entry name" value="ThiF"/>
    <property type="match status" value="2"/>
</dbReference>
<dbReference type="Pfam" id="PF10585">
    <property type="entry name" value="UBA_E1_SCCH"/>
    <property type="match status" value="1"/>
</dbReference>
<dbReference type="PRINTS" id="PR01849">
    <property type="entry name" value="UBIQUITINACT"/>
</dbReference>
<dbReference type="SMART" id="SM00985">
    <property type="entry name" value="UBA_e1_C"/>
    <property type="match status" value="1"/>
</dbReference>
<dbReference type="SUPFAM" id="SSF69572">
    <property type="entry name" value="Activating enzymes of the ubiquitin-like proteins"/>
    <property type="match status" value="2"/>
</dbReference>
<dbReference type="PROSITE" id="PS00536">
    <property type="entry name" value="UBIQUITIN_ACTIVAT_1"/>
    <property type="match status" value="1"/>
</dbReference>
<dbReference type="PROSITE" id="PS00865">
    <property type="entry name" value="UBIQUITIN_ACTIVAT_2"/>
    <property type="match status" value="1"/>
</dbReference>